<comment type="function">
    <text evidence="1">Catalyzes the attachment of L-aspartate to tRNA(Asp) in a two-step reaction: L-aspartate is first activated by ATP to form Asp-AMP and then transferred to the acceptor end of tRNA(Asp).</text>
</comment>
<comment type="catalytic activity">
    <reaction evidence="1">
        <text>tRNA(Asp) + L-aspartate + ATP = L-aspartyl-tRNA(Asp) + AMP + diphosphate</text>
        <dbReference type="Rhea" id="RHEA:19649"/>
        <dbReference type="Rhea" id="RHEA-COMP:9660"/>
        <dbReference type="Rhea" id="RHEA-COMP:9678"/>
        <dbReference type="ChEBI" id="CHEBI:29991"/>
        <dbReference type="ChEBI" id="CHEBI:30616"/>
        <dbReference type="ChEBI" id="CHEBI:33019"/>
        <dbReference type="ChEBI" id="CHEBI:78442"/>
        <dbReference type="ChEBI" id="CHEBI:78516"/>
        <dbReference type="ChEBI" id="CHEBI:456215"/>
        <dbReference type="EC" id="6.1.1.12"/>
    </reaction>
</comment>
<comment type="subunit">
    <text evidence="1">Homodimer.</text>
</comment>
<comment type="subcellular location">
    <subcellularLocation>
        <location evidence="1">Cytoplasm</location>
    </subcellularLocation>
</comment>
<comment type="similarity">
    <text evidence="1">Belongs to the class-II aminoacyl-tRNA synthetase family. Type 1 subfamily.</text>
</comment>
<gene>
    <name evidence="1" type="primary">aspS</name>
    <name type="ordered locus">HAPS_1646</name>
</gene>
<sequence>MMRSHYCGVLNRTHVGEQVTLSGWVHRVRNLGRFIFMQIRDREGIVQVFFDEKDEALFKQASALRAEACVQIKGEVIARDTSQINKEMATGEIEVLVKELVVYNNSEVLPLDFNQNNTEEQRLKYRYLDLRRPEMAERLKTRAKITSFVRRYMDDNGFLDIETPMLTKATPEGARDYLVPSRVHKGKFYALPQSPQLFKQLLMMSGFDRYYQIAKCFRDEDLRADRQPEFTQIDVETTFMTAPEVRAMMEKMIRGLWLDRLNVDLGEFPQMTFAEAMRRYGSDKPDLRNPLELVDVADILKDVEFKVFSGPANDPEGRVAVIRVPNGAEITRKQIDEYTQFVGNYGAKGLAWAKVNDVNAGLEGLQSPIAKFLTDDVVKALLARVNAQNGDIIFFGADSEKVVTDAMGALRLKVGRDLGLTDLTAWKPLWVVDFPMFEKDDEGNWSAMHHPFTAPKDLSPEELVQNPKGAVANAYDMVINGYEVGGGSVRIFDPKMQQTVFGILGINEEEQKEKFGFLLDALKFGTPPHAGLAFGLDRLTMLITGTENIRDVIAFPKTTAAACLMTDAPSFGNPKALAELAIQTTVEKES</sequence>
<feature type="chain" id="PRO_1000198992" description="Aspartate--tRNA ligase">
    <location>
        <begin position="1"/>
        <end position="590"/>
    </location>
</feature>
<feature type="region of interest" description="Aspartate" evidence="1">
    <location>
        <begin position="196"/>
        <end position="199"/>
    </location>
</feature>
<feature type="binding site" evidence="1">
    <location>
        <position position="172"/>
    </location>
    <ligand>
        <name>L-aspartate</name>
        <dbReference type="ChEBI" id="CHEBI:29991"/>
    </ligand>
</feature>
<feature type="binding site" evidence="1">
    <location>
        <begin position="218"/>
        <end position="220"/>
    </location>
    <ligand>
        <name>ATP</name>
        <dbReference type="ChEBI" id="CHEBI:30616"/>
    </ligand>
</feature>
<feature type="binding site" evidence="1">
    <location>
        <position position="218"/>
    </location>
    <ligand>
        <name>L-aspartate</name>
        <dbReference type="ChEBI" id="CHEBI:29991"/>
    </ligand>
</feature>
<feature type="binding site" evidence="1">
    <location>
        <position position="227"/>
    </location>
    <ligand>
        <name>ATP</name>
        <dbReference type="ChEBI" id="CHEBI:30616"/>
    </ligand>
</feature>
<feature type="binding site" evidence="1">
    <location>
        <position position="449"/>
    </location>
    <ligand>
        <name>L-aspartate</name>
        <dbReference type="ChEBI" id="CHEBI:29991"/>
    </ligand>
</feature>
<feature type="binding site" evidence="1">
    <location>
        <position position="483"/>
    </location>
    <ligand>
        <name>ATP</name>
        <dbReference type="ChEBI" id="CHEBI:30616"/>
    </ligand>
</feature>
<feature type="binding site" evidence="1">
    <location>
        <position position="490"/>
    </location>
    <ligand>
        <name>L-aspartate</name>
        <dbReference type="ChEBI" id="CHEBI:29991"/>
    </ligand>
</feature>
<feature type="binding site" evidence="1">
    <location>
        <begin position="535"/>
        <end position="538"/>
    </location>
    <ligand>
        <name>ATP</name>
        <dbReference type="ChEBI" id="CHEBI:30616"/>
    </ligand>
</feature>
<name>SYD_GLAP5</name>
<proteinExistence type="inferred from homology"/>
<keyword id="KW-0030">Aminoacyl-tRNA synthetase</keyword>
<keyword id="KW-0067">ATP-binding</keyword>
<keyword id="KW-0963">Cytoplasm</keyword>
<keyword id="KW-0436">Ligase</keyword>
<keyword id="KW-0547">Nucleotide-binding</keyword>
<keyword id="KW-0648">Protein biosynthesis</keyword>
<keyword id="KW-1185">Reference proteome</keyword>
<dbReference type="EC" id="6.1.1.12" evidence="1"/>
<dbReference type="EMBL" id="CP001321">
    <property type="protein sequence ID" value="ACL33191.1"/>
    <property type="molecule type" value="Genomic_DNA"/>
</dbReference>
<dbReference type="RefSeq" id="WP_015939868.1">
    <property type="nucleotide sequence ID" value="NC_011852.1"/>
</dbReference>
<dbReference type="SMR" id="B8F789"/>
<dbReference type="STRING" id="557723.HAPS_1646"/>
<dbReference type="KEGG" id="hap:HAPS_1646"/>
<dbReference type="PATRIC" id="fig|557723.8.peg.1616"/>
<dbReference type="HOGENOM" id="CLU_014330_3_2_6"/>
<dbReference type="Proteomes" id="UP000006743">
    <property type="component" value="Chromosome"/>
</dbReference>
<dbReference type="GO" id="GO:0005737">
    <property type="term" value="C:cytoplasm"/>
    <property type="evidence" value="ECO:0007669"/>
    <property type="project" value="UniProtKB-SubCell"/>
</dbReference>
<dbReference type="GO" id="GO:0004815">
    <property type="term" value="F:aspartate-tRNA ligase activity"/>
    <property type="evidence" value="ECO:0007669"/>
    <property type="project" value="UniProtKB-UniRule"/>
</dbReference>
<dbReference type="GO" id="GO:0005524">
    <property type="term" value="F:ATP binding"/>
    <property type="evidence" value="ECO:0007669"/>
    <property type="project" value="UniProtKB-UniRule"/>
</dbReference>
<dbReference type="GO" id="GO:0003676">
    <property type="term" value="F:nucleic acid binding"/>
    <property type="evidence" value="ECO:0007669"/>
    <property type="project" value="InterPro"/>
</dbReference>
<dbReference type="GO" id="GO:0006422">
    <property type="term" value="P:aspartyl-tRNA aminoacylation"/>
    <property type="evidence" value="ECO:0007669"/>
    <property type="project" value="UniProtKB-UniRule"/>
</dbReference>
<dbReference type="CDD" id="cd00777">
    <property type="entry name" value="AspRS_core"/>
    <property type="match status" value="1"/>
</dbReference>
<dbReference type="CDD" id="cd04317">
    <property type="entry name" value="EcAspRS_like_N"/>
    <property type="match status" value="1"/>
</dbReference>
<dbReference type="Gene3D" id="3.30.930.10">
    <property type="entry name" value="Bira Bifunctional Protein, Domain 2"/>
    <property type="match status" value="1"/>
</dbReference>
<dbReference type="Gene3D" id="3.30.1360.30">
    <property type="entry name" value="GAD-like domain"/>
    <property type="match status" value="1"/>
</dbReference>
<dbReference type="Gene3D" id="2.40.50.140">
    <property type="entry name" value="Nucleic acid-binding proteins"/>
    <property type="match status" value="1"/>
</dbReference>
<dbReference type="HAMAP" id="MF_00044">
    <property type="entry name" value="Asp_tRNA_synth_type1"/>
    <property type="match status" value="1"/>
</dbReference>
<dbReference type="InterPro" id="IPR004364">
    <property type="entry name" value="Aa-tRNA-synt_II"/>
</dbReference>
<dbReference type="InterPro" id="IPR006195">
    <property type="entry name" value="aa-tRNA-synth_II"/>
</dbReference>
<dbReference type="InterPro" id="IPR045864">
    <property type="entry name" value="aa-tRNA-synth_II/BPL/LPL"/>
</dbReference>
<dbReference type="InterPro" id="IPR004524">
    <property type="entry name" value="Asp-tRNA-ligase_1"/>
</dbReference>
<dbReference type="InterPro" id="IPR047089">
    <property type="entry name" value="Asp-tRNA-ligase_1_N"/>
</dbReference>
<dbReference type="InterPro" id="IPR002312">
    <property type="entry name" value="Asp/Asn-tRNA-synth_IIb"/>
</dbReference>
<dbReference type="InterPro" id="IPR047090">
    <property type="entry name" value="AspRS_core"/>
</dbReference>
<dbReference type="InterPro" id="IPR004115">
    <property type="entry name" value="GAD-like_sf"/>
</dbReference>
<dbReference type="InterPro" id="IPR029351">
    <property type="entry name" value="GAD_dom"/>
</dbReference>
<dbReference type="InterPro" id="IPR012340">
    <property type="entry name" value="NA-bd_OB-fold"/>
</dbReference>
<dbReference type="InterPro" id="IPR004365">
    <property type="entry name" value="NA-bd_OB_tRNA"/>
</dbReference>
<dbReference type="NCBIfam" id="TIGR00459">
    <property type="entry name" value="aspS_bact"/>
    <property type="match status" value="1"/>
</dbReference>
<dbReference type="NCBIfam" id="NF001750">
    <property type="entry name" value="PRK00476.1"/>
    <property type="match status" value="1"/>
</dbReference>
<dbReference type="PANTHER" id="PTHR22594:SF5">
    <property type="entry name" value="ASPARTATE--TRNA LIGASE, MITOCHONDRIAL"/>
    <property type="match status" value="1"/>
</dbReference>
<dbReference type="PANTHER" id="PTHR22594">
    <property type="entry name" value="ASPARTYL/LYSYL-TRNA SYNTHETASE"/>
    <property type="match status" value="1"/>
</dbReference>
<dbReference type="Pfam" id="PF02938">
    <property type="entry name" value="GAD"/>
    <property type="match status" value="1"/>
</dbReference>
<dbReference type="Pfam" id="PF00152">
    <property type="entry name" value="tRNA-synt_2"/>
    <property type="match status" value="1"/>
</dbReference>
<dbReference type="Pfam" id="PF01336">
    <property type="entry name" value="tRNA_anti-codon"/>
    <property type="match status" value="1"/>
</dbReference>
<dbReference type="PRINTS" id="PR01042">
    <property type="entry name" value="TRNASYNTHASP"/>
</dbReference>
<dbReference type="SUPFAM" id="SSF55681">
    <property type="entry name" value="Class II aaRS and biotin synthetases"/>
    <property type="match status" value="1"/>
</dbReference>
<dbReference type="SUPFAM" id="SSF55261">
    <property type="entry name" value="GAD domain-like"/>
    <property type="match status" value="1"/>
</dbReference>
<dbReference type="SUPFAM" id="SSF50249">
    <property type="entry name" value="Nucleic acid-binding proteins"/>
    <property type="match status" value="1"/>
</dbReference>
<dbReference type="PROSITE" id="PS50862">
    <property type="entry name" value="AA_TRNA_LIGASE_II"/>
    <property type="match status" value="1"/>
</dbReference>
<protein>
    <recommendedName>
        <fullName evidence="1">Aspartate--tRNA ligase</fullName>
        <ecNumber evidence="1">6.1.1.12</ecNumber>
    </recommendedName>
    <alternativeName>
        <fullName evidence="1">Aspartyl-tRNA synthetase</fullName>
        <shortName evidence="1">AspRS</shortName>
    </alternativeName>
</protein>
<evidence type="ECO:0000255" key="1">
    <source>
        <dbReference type="HAMAP-Rule" id="MF_00044"/>
    </source>
</evidence>
<reference key="1">
    <citation type="journal article" date="2009" name="J. Bacteriol.">
        <title>Complete genome sequence of Haemophilus parasuis SH0165.</title>
        <authorList>
            <person name="Yue M."/>
            <person name="Yang F."/>
            <person name="Yang J."/>
            <person name="Bei W."/>
            <person name="Cai X."/>
            <person name="Chen L."/>
            <person name="Dong J."/>
            <person name="Zhou R."/>
            <person name="Jin M."/>
            <person name="Jin Q."/>
            <person name="Chen H."/>
        </authorList>
    </citation>
    <scope>NUCLEOTIDE SEQUENCE [LARGE SCALE GENOMIC DNA]</scope>
    <source>
        <strain>SH0165</strain>
    </source>
</reference>
<organism>
    <name type="scientific">Glaesserella parasuis serovar 5 (strain SH0165)</name>
    <name type="common">Haemophilus parasuis</name>
    <dbReference type="NCBI Taxonomy" id="557723"/>
    <lineage>
        <taxon>Bacteria</taxon>
        <taxon>Pseudomonadati</taxon>
        <taxon>Pseudomonadota</taxon>
        <taxon>Gammaproteobacteria</taxon>
        <taxon>Pasteurellales</taxon>
        <taxon>Pasteurellaceae</taxon>
        <taxon>Glaesserella</taxon>
    </lineage>
</organism>
<accession>B8F789</accession>